<name>Y402_RICPR</name>
<accession>Q9ZDC9</accession>
<reference key="1">
    <citation type="journal article" date="1998" name="Nature">
        <title>The genome sequence of Rickettsia prowazekii and the origin of mitochondria.</title>
        <authorList>
            <person name="Andersson S.G.E."/>
            <person name="Zomorodipour A."/>
            <person name="Andersson J.O."/>
            <person name="Sicheritz-Ponten T."/>
            <person name="Alsmark U.C.M."/>
            <person name="Podowski R.M."/>
            <person name="Naeslund A.K."/>
            <person name="Eriksson A.-S."/>
            <person name="Winkler H.H."/>
            <person name="Kurland C.G."/>
        </authorList>
    </citation>
    <scope>NUCLEOTIDE SEQUENCE [LARGE SCALE GENOMIC DNA]</scope>
    <source>
        <strain>Madrid E</strain>
    </source>
</reference>
<protein>
    <recommendedName>
        <fullName>Putative carboxypeptidase RP402</fullName>
        <ecNumber>3.4.16.-</ecNumber>
    </recommendedName>
</protein>
<gene>
    <name type="ordered locus">RP402</name>
</gene>
<proteinExistence type="inferred from homology"/>
<organism>
    <name type="scientific">Rickettsia prowazekii (strain Madrid E)</name>
    <dbReference type="NCBI Taxonomy" id="272947"/>
    <lineage>
        <taxon>Bacteria</taxon>
        <taxon>Pseudomonadati</taxon>
        <taxon>Pseudomonadota</taxon>
        <taxon>Alphaproteobacteria</taxon>
        <taxon>Rickettsiales</taxon>
        <taxon>Rickettsiaceae</taxon>
        <taxon>Rickettsieae</taxon>
        <taxon>Rickettsia</taxon>
        <taxon>typhus group</taxon>
    </lineage>
</organism>
<sequence>MVLKNLSLLIILFFSTSVFSVSNNLINIPITVVATATGADSKTLSDLKNINGLNLQIPAKCFTKGKLPFLASSDEVRFNCLRDALFDKSDNVVWSLRGGYGSARIIPDLLKLSKPNKEKFFIGYSDITALHLFLSQEWGWRTIHGSNIADLLKTEKDQGNFTKLGEILKGKVKQVTIDNLIPLNDIAKSSDLVKGNLTGGNLTMVQTSIGTRWQIKTKGKILFLEDTNVAPFRLDRELLHLKQSMLLEGVKAIIFGSFGKDLDATMLVLRNFAYSLNIPVFKTNRFGHERINDPIIYNTNSKIIMSKHKEFKLIMEL</sequence>
<feature type="chain" id="PRO_0000172844" description="Putative carboxypeptidase RP402">
    <location>
        <begin position="1"/>
        <end position="317"/>
    </location>
</feature>
<feature type="active site" description="Nucleophile" evidence="1">
    <location>
        <position position="125"/>
    </location>
</feature>
<feature type="active site" description="Charge relay system" evidence="1">
    <location>
        <position position="225"/>
    </location>
</feature>
<feature type="active site" description="Charge relay system" evidence="1">
    <location>
        <position position="288"/>
    </location>
</feature>
<comment type="similarity">
    <text evidence="2">Belongs to the peptidase S66 family.</text>
</comment>
<evidence type="ECO:0000250" key="1"/>
<evidence type="ECO:0000305" key="2"/>
<keyword id="KW-0121">Carboxypeptidase</keyword>
<keyword id="KW-0378">Hydrolase</keyword>
<keyword id="KW-0645">Protease</keyword>
<keyword id="KW-1185">Reference proteome</keyword>
<keyword id="KW-0720">Serine protease</keyword>
<dbReference type="EC" id="3.4.16.-"/>
<dbReference type="EMBL" id="AJ235271">
    <property type="protein sequence ID" value="CAA14859.1"/>
    <property type="molecule type" value="Genomic_DNA"/>
</dbReference>
<dbReference type="PIR" id="A71698">
    <property type="entry name" value="A71698"/>
</dbReference>
<dbReference type="RefSeq" id="NP_220783.1">
    <property type="nucleotide sequence ID" value="NC_000963.1"/>
</dbReference>
<dbReference type="RefSeq" id="WP_004599449.1">
    <property type="nucleotide sequence ID" value="NC_000963.1"/>
</dbReference>
<dbReference type="SMR" id="Q9ZDC9"/>
<dbReference type="STRING" id="272947.gene:17555482"/>
<dbReference type="EnsemblBacteria" id="CAA14859">
    <property type="protein sequence ID" value="CAA14859"/>
    <property type="gene ID" value="CAA14859"/>
</dbReference>
<dbReference type="KEGG" id="rpr:RP402"/>
<dbReference type="PATRIC" id="fig|272947.5.peg.415"/>
<dbReference type="eggNOG" id="COG1619">
    <property type="taxonomic scope" value="Bacteria"/>
</dbReference>
<dbReference type="HOGENOM" id="CLU_034346_3_0_5"/>
<dbReference type="OrthoDB" id="9807329at2"/>
<dbReference type="Proteomes" id="UP000002480">
    <property type="component" value="Chromosome"/>
</dbReference>
<dbReference type="GO" id="GO:0004180">
    <property type="term" value="F:carboxypeptidase activity"/>
    <property type="evidence" value="ECO:0007669"/>
    <property type="project" value="UniProtKB-KW"/>
</dbReference>
<dbReference type="GO" id="GO:0008236">
    <property type="term" value="F:serine-type peptidase activity"/>
    <property type="evidence" value="ECO:0007669"/>
    <property type="project" value="UniProtKB-KW"/>
</dbReference>
<dbReference type="GO" id="GO:0006508">
    <property type="term" value="P:proteolysis"/>
    <property type="evidence" value="ECO:0007669"/>
    <property type="project" value="UniProtKB-KW"/>
</dbReference>
<dbReference type="CDD" id="cd07025">
    <property type="entry name" value="Peptidase_S66"/>
    <property type="match status" value="1"/>
</dbReference>
<dbReference type="Gene3D" id="3.40.50.10740">
    <property type="entry name" value="Class I glutamine amidotransferase-like"/>
    <property type="match status" value="1"/>
</dbReference>
<dbReference type="Gene3D" id="3.50.30.60">
    <property type="entry name" value="LD-carboxypeptidase A C-terminal domain-like"/>
    <property type="match status" value="1"/>
</dbReference>
<dbReference type="InterPro" id="IPR027461">
    <property type="entry name" value="Carboxypeptidase_A_C_sf"/>
</dbReference>
<dbReference type="InterPro" id="IPR029062">
    <property type="entry name" value="Class_I_gatase-like"/>
</dbReference>
<dbReference type="InterPro" id="IPR027478">
    <property type="entry name" value="LdcA_N"/>
</dbReference>
<dbReference type="InterPro" id="IPR040449">
    <property type="entry name" value="Peptidase_S66_N"/>
</dbReference>
<dbReference type="InterPro" id="IPR040921">
    <property type="entry name" value="Peptidase_S66C"/>
</dbReference>
<dbReference type="InterPro" id="IPR003507">
    <property type="entry name" value="S66_fam"/>
</dbReference>
<dbReference type="PANTHER" id="PTHR30237">
    <property type="entry name" value="MURAMOYLTETRAPEPTIDE CARBOXYPEPTIDASE"/>
    <property type="match status" value="1"/>
</dbReference>
<dbReference type="PANTHER" id="PTHR30237:SF2">
    <property type="entry name" value="MUREIN TETRAPEPTIDE CARBOXYPEPTIDASE"/>
    <property type="match status" value="1"/>
</dbReference>
<dbReference type="Pfam" id="PF02016">
    <property type="entry name" value="Peptidase_S66"/>
    <property type="match status" value="1"/>
</dbReference>
<dbReference type="Pfam" id="PF17676">
    <property type="entry name" value="Peptidase_S66C"/>
    <property type="match status" value="1"/>
</dbReference>
<dbReference type="PIRSF" id="PIRSF028757">
    <property type="entry name" value="LD-carboxypeptidase"/>
    <property type="match status" value="1"/>
</dbReference>
<dbReference type="SUPFAM" id="SSF52317">
    <property type="entry name" value="Class I glutamine amidotransferase-like"/>
    <property type="match status" value="1"/>
</dbReference>
<dbReference type="SUPFAM" id="SSF141986">
    <property type="entry name" value="LD-carboxypeptidase A C-terminal domain-like"/>
    <property type="match status" value="1"/>
</dbReference>